<reference evidence="8" key="1">
    <citation type="journal article" date="2011" name="Toxicon">
        <title>Biochemical and molecular characterization of the venom from the Cuban scorpion Rhopalurus junceus.</title>
        <authorList>
            <person name="Garcia-Gomez B.I."/>
            <person name="Coronas F.I."/>
            <person name="Restano-Cassulini R."/>
            <person name="Rodriguez R.R."/>
            <person name="Possani L.D."/>
        </authorList>
    </citation>
    <scope>NUCLEOTIDE SEQUENCE [MRNA]</scope>
    <source>
        <tissue evidence="8">Venom gland</tissue>
    </source>
</reference>
<feature type="chain" id="PRO_0000413456" description="Putative beta-neurotoxin RjAa4">
    <location>
        <begin position="1"/>
        <end position="65"/>
    </location>
</feature>
<feature type="domain" description="LCN-type CS-alpha/beta" evidence="5">
    <location>
        <begin position="1"/>
        <end position="64"/>
    </location>
</feature>
<feature type="disulfide bond" evidence="5">
    <location>
        <begin position="11"/>
        <end position="63"/>
    </location>
</feature>
<feature type="disulfide bond" evidence="5">
    <location>
        <begin position="15"/>
        <end position="37"/>
    </location>
</feature>
<feature type="disulfide bond" evidence="5">
    <location>
        <begin position="22"/>
        <end position="44"/>
    </location>
</feature>
<feature type="disulfide bond" evidence="5">
    <location>
        <begin position="26"/>
        <end position="46"/>
    </location>
</feature>
<feature type="non-terminal residue" evidence="8">
    <location>
        <position position="1"/>
    </location>
</feature>
<protein>
    <recommendedName>
        <fullName evidence="3">Putative beta-neurotoxin RjAa4</fullName>
    </recommendedName>
</protein>
<comment type="function">
    <text evidence="1">Beta toxins bind voltage-independently at site-4 of sodium channels (Nav) and shift the voltage of activation toward more negative potentials thereby affecting sodium channel activation and promoting spontaneous and repetitive firing.</text>
</comment>
<comment type="subcellular location">
    <subcellularLocation>
        <location evidence="2">Secreted</location>
    </subcellularLocation>
</comment>
<comment type="tissue specificity">
    <text evidence="7">Expressed by the venom gland.</text>
</comment>
<comment type="domain">
    <text evidence="6">Has the structural arrangement of an alpha-helix connected to antiparallel beta-sheets by disulfide bonds (CS-alpha/beta).</text>
</comment>
<comment type="similarity">
    <text evidence="4">Belongs to the long (4 C-C) scorpion toxin superfamily. Sodium channel inhibitor family. Beta subfamily.</text>
</comment>
<organism>
    <name type="scientific">Rhopalurus junceus</name>
    <name type="common">Caribbean blue scorpion</name>
    <dbReference type="NCBI Taxonomy" id="419285"/>
    <lineage>
        <taxon>Eukaryota</taxon>
        <taxon>Metazoa</taxon>
        <taxon>Ecdysozoa</taxon>
        <taxon>Arthropoda</taxon>
        <taxon>Chelicerata</taxon>
        <taxon>Arachnida</taxon>
        <taxon>Scorpiones</taxon>
        <taxon>Buthida</taxon>
        <taxon>Buthoidea</taxon>
        <taxon>Buthidae</taxon>
        <taxon>Rhopalurus</taxon>
    </lineage>
</organism>
<keyword id="KW-1015">Disulfide bond</keyword>
<keyword id="KW-0872">Ion channel impairing toxin</keyword>
<keyword id="KW-0528">Neurotoxin</keyword>
<keyword id="KW-0964">Secreted</keyword>
<keyword id="KW-0800">Toxin</keyword>
<keyword id="KW-0738">Voltage-gated sodium channel impairing toxin</keyword>
<evidence type="ECO:0000250" key="1"/>
<evidence type="ECO:0000250" key="2">
    <source>
        <dbReference type="UniProtKB" id="P15226"/>
    </source>
</evidence>
<evidence type="ECO:0000250" key="3">
    <source>
        <dbReference type="UniProtKB" id="Q1I176"/>
    </source>
</evidence>
<evidence type="ECO:0000255" key="4"/>
<evidence type="ECO:0000255" key="5">
    <source>
        <dbReference type="PROSITE-ProRule" id="PRU01210"/>
    </source>
</evidence>
<evidence type="ECO:0000305" key="6"/>
<evidence type="ECO:0000305" key="7">
    <source>
    </source>
</evidence>
<evidence type="ECO:0000312" key="8">
    <source>
        <dbReference type="EMBL" id="ADV16818.1"/>
    </source>
</evidence>
<sequence length="65" mass="7345">KEGYPMGRDGCKISCVINNNFCKVECQAKWRQSDGYCYFWGLSCYCTNLPDDAQVWDSSTNKCGG</sequence>
<proteinExistence type="evidence at transcript level"/>
<dbReference type="EMBL" id="HM233940">
    <property type="protein sequence ID" value="ADV16818.1"/>
    <property type="molecule type" value="mRNA"/>
</dbReference>
<dbReference type="SMR" id="E7CLN1"/>
<dbReference type="GO" id="GO:0005576">
    <property type="term" value="C:extracellular region"/>
    <property type="evidence" value="ECO:0007669"/>
    <property type="project" value="UniProtKB-SubCell"/>
</dbReference>
<dbReference type="GO" id="GO:0019871">
    <property type="term" value="F:sodium channel inhibitor activity"/>
    <property type="evidence" value="ECO:0007669"/>
    <property type="project" value="InterPro"/>
</dbReference>
<dbReference type="GO" id="GO:0090729">
    <property type="term" value="F:toxin activity"/>
    <property type="evidence" value="ECO:0007669"/>
    <property type="project" value="UniProtKB-KW"/>
</dbReference>
<dbReference type="GO" id="GO:0006952">
    <property type="term" value="P:defense response"/>
    <property type="evidence" value="ECO:0007669"/>
    <property type="project" value="InterPro"/>
</dbReference>
<dbReference type="CDD" id="cd23106">
    <property type="entry name" value="neurotoxins_LC_scorpion"/>
    <property type="match status" value="1"/>
</dbReference>
<dbReference type="FunFam" id="3.30.30.10:FF:000002">
    <property type="entry name" value="Alpha-like toxin BmK-M1"/>
    <property type="match status" value="1"/>
</dbReference>
<dbReference type="Gene3D" id="3.30.30.10">
    <property type="entry name" value="Knottin, scorpion toxin-like"/>
    <property type="match status" value="1"/>
</dbReference>
<dbReference type="InterPro" id="IPR044062">
    <property type="entry name" value="LCN-type_CS_alpha_beta_dom"/>
</dbReference>
<dbReference type="InterPro" id="IPR003614">
    <property type="entry name" value="Scorpion_toxin-like"/>
</dbReference>
<dbReference type="InterPro" id="IPR036574">
    <property type="entry name" value="Scorpion_toxin-like_sf"/>
</dbReference>
<dbReference type="InterPro" id="IPR018218">
    <property type="entry name" value="Scorpion_toxinL"/>
</dbReference>
<dbReference type="InterPro" id="IPR002061">
    <property type="entry name" value="Scorpion_toxinL/defensin"/>
</dbReference>
<dbReference type="Pfam" id="PF00537">
    <property type="entry name" value="Toxin_3"/>
    <property type="match status" value="1"/>
</dbReference>
<dbReference type="PRINTS" id="PR00285">
    <property type="entry name" value="SCORPNTOXIN"/>
</dbReference>
<dbReference type="SMART" id="SM00505">
    <property type="entry name" value="Knot1"/>
    <property type="match status" value="1"/>
</dbReference>
<dbReference type="SUPFAM" id="SSF57095">
    <property type="entry name" value="Scorpion toxin-like"/>
    <property type="match status" value="1"/>
</dbReference>
<dbReference type="PROSITE" id="PS51863">
    <property type="entry name" value="LCN_CSAB"/>
    <property type="match status" value="1"/>
</dbReference>
<accession>E7CLN1</accession>
<name>SCX4_RHOJU</name>